<organism>
    <name type="scientific">Rattus norvegicus</name>
    <name type="common">Rat</name>
    <dbReference type="NCBI Taxonomy" id="10116"/>
    <lineage>
        <taxon>Eukaryota</taxon>
        <taxon>Metazoa</taxon>
        <taxon>Chordata</taxon>
        <taxon>Craniata</taxon>
        <taxon>Vertebrata</taxon>
        <taxon>Euteleostomi</taxon>
        <taxon>Mammalia</taxon>
        <taxon>Eutheria</taxon>
        <taxon>Euarchontoglires</taxon>
        <taxon>Glires</taxon>
        <taxon>Rodentia</taxon>
        <taxon>Myomorpha</taxon>
        <taxon>Muroidea</taxon>
        <taxon>Muridae</taxon>
        <taxon>Murinae</taxon>
        <taxon>Rattus</taxon>
    </lineage>
</organism>
<dbReference type="InParanoid" id="P56573"/>
<dbReference type="Proteomes" id="UP000002494">
    <property type="component" value="Unplaced"/>
</dbReference>
<sequence>FQYDSQYDGF</sequence>
<accession>P56573</accession>
<reference key="1">
    <citation type="submission" date="1998-09" db="UniProtKB">
        <authorList>
            <person name="Li X.-P."/>
            <person name="Pleissner K.-P."/>
            <person name="Scheler C."/>
            <person name="Regitz-Zagrosek V."/>
            <person name="Salikov J."/>
            <person name="Jungblut P.R."/>
        </authorList>
    </citation>
    <scope>PROTEIN SEQUENCE</scope>
    <source>
        <strain>Wistar</strain>
        <tissue>Heart</tissue>
    </source>
</reference>
<feature type="chain" id="PRO_0000055482" description="Unknown protein from spot P5 of 2D-PAGE of heart tissue">
    <location>
        <begin position="1"/>
        <end position="10" status="greater than"/>
    </location>
</feature>
<feature type="unsure residue" description="G or P">
    <location>
        <position position="9"/>
    </location>
</feature>
<feature type="non-terminal residue">
    <location>
        <position position="10"/>
    </location>
</feature>
<protein>
    <recommendedName>
        <fullName>Unknown protein from spot P5 of 2D-PAGE of heart tissue</fullName>
    </recommendedName>
</protein>
<name>UH05_RAT</name>
<comment type="miscellaneous">
    <text>On the 2D-gel the determined pI of this unknown protein is: 8.3, its MW is: 30 kDa.</text>
</comment>
<proteinExistence type="evidence at protein level"/>
<keyword id="KW-0903">Direct protein sequencing</keyword>
<keyword id="KW-1185">Reference proteome</keyword>